<name>GLYCO_TUPVT</name>
<dbReference type="EMBL" id="AY840978">
    <property type="protein sequence ID" value="AAX47601.1"/>
    <property type="molecule type" value="Genomic_RNA"/>
</dbReference>
<dbReference type="RefSeq" id="YP_238533.1">
    <property type="nucleotide sequence ID" value="NC_007020.1"/>
</dbReference>
<dbReference type="SMR" id="Q4VKV3"/>
<dbReference type="GeneID" id="3416614"/>
<dbReference type="KEGG" id="vg:3416614"/>
<dbReference type="Proteomes" id="UP000029771">
    <property type="component" value="Segment"/>
</dbReference>
<dbReference type="GO" id="GO:0033644">
    <property type="term" value="C:host cell membrane"/>
    <property type="evidence" value="ECO:0007669"/>
    <property type="project" value="UniProtKB-SubCell"/>
</dbReference>
<dbReference type="GO" id="GO:0016020">
    <property type="term" value="C:membrane"/>
    <property type="evidence" value="ECO:0007669"/>
    <property type="project" value="UniProtKB-KW"/>
</dbReference>
<dbReference type="GO" id="GO:0019031">
    <property type="term" value="C:viral envelope"/>
    <property type="evidence" value="ECO:0007669"/>
    <property type="project" value="UniProtKB-KW"/>
</dbReference>
<dbReference type="GO" id="GO:0055036">
    <property type="term" value="C:virion membrane"/>
    <property type="evidence" value="ECO:0007669"/>
    <property type="project" value="UniProtKB-SubCell"/>
</dbReference>
<dbReference type="GO" id="GO:0075512">
    <property type="term" value="P:clathrin-dependent endocytosis of virus by host cell"/>
    <property type="evidence" value="ECO:0007669"/>
    <property type="project" value="UniProtKB-KW"/>
</dbReference>
<dbReference type="GO" id="GO:0039654">
    <property type="term" value="P:fusion of virus membrane with host endosome membrane"/>
    <property type="evidence" value="ECO:0007669"/>
    <property type="project" value="UniProtKB-KW"/>
</dbReference>
<dbReference type="GO" id="GO:0019062">
    <property type="term" value="P:virion attachment to host cell"/>
    <property type="evidence" value="ECO:0007669"/>
    <property type="project" value="UniProtKB-KW"/>
</dbReference>
<dbReference type="Gene3D" id="6.10.140.740">
    <property type="match status" value="1"/>
</dbReference>
<dbReference type="InterPro" id="IPR055447">
    <property type="entry name" value="Rhabdo_glycop_CD"/>
</dbReference>
<dbReference type="InterPro" id="IPR001903">
    <property type="entry name" value="Rhabdo_glycop_FD"/>
</dbReference>
<dbReference type="Pfam" id="PF24833">
    <property type="entry name" value="Rhabdo_glycop_CD"/>
    <property type="match status" value="1"/>
</dbReference>
<dbReference type="Pfam" id="PF00974">
    <property type="entry name" value="Rhabdo_glycop_FD"/>
    <property type="match status" value="1"/>
</dbReference>
<dbReference type="SUPFAM" id="SSF161008">
    <property type="entry name" value="Viral glycoprotein ectodomain-like"/>
    <property type="match status" value="1"/>
</dbReference>
<organism>
    <name type="scientific">Tupaia virus (isolate Tupaia/Thailand/-/1986)</name>
    <name type="common">TUPV</name>
    <dbReference type="NCBI Taxonomy" id="1560034"/>
    <lineage>
        <taxon>Viruses</taxon>
        <taxon>Riboviria</taxon>
        <taxon>Orthornavirae</taxon>
        <taxon>Negarnaviricota</taxon>
        <taxon>Haploviricotina</taxon>
        <taxon>Monjiviricetes</taxon>
        <taxon>Mononegavirales</taxon>
        <taxon>Rhabdoviridae</taxon>
        <taxon>Alpharhabdovirinae</taxon>
        <taxon>Tupavirus</taxon>
        <taxon>Tupavirus tupaia</taxon>
    </lineage>
</organism>
<keyword id="KW-1165">Clathrin-mediated endocytosis of virus by host</keyword>
<keyword id="KW-1015">Disulfide bond</keyword>
<keyword id="KW-1170">Fusion of virus membrane with host endosomal membrane</keyword>
<keyword id="KW-1168">Fusion of virus membrane with host membrane</keyword>
<keyword id="KW-0325">Glycoprotein</keyword>
<keyword id="KW-1043">Host membrane</keyword>
<keyword id="KW-0945">Host-virus interaction</keyword>
<keyword id="KW-0449">Lipoprotein</keyword>
<keyword id="KW-0472">Membrane</keyword>
<keyword id="KW-0564">Palmitate</keyword>
<keyword id="KW-1185">Reference proteome</keyword>
<keyword id="KW-0732">Signal</keyword>
<keyword id="KW-0812">Transmembrane</keyword>
<keyword id="KW-1133">Transmembrane helix</keyword>
<keyword id="KW-1161">Viral attachment to host cell</keyword>
<keyword id="KW-0261">Viral envelope protein</keyword>
<keyword id="KW-1162">Viral penetration into host cytoplasm</keyword>
<keyword id="KW-0946">Virion</keyword>
<keyword id="KW-1164">Virus endocytosis by host</keyword>
<keyword id="KW-1160">Virus entry into host cell</keyword>
<proteinExistence type="inferred from homology"/>
<reference key="1">
    <citation type="journal article" date="2005" name="J. Virol.">
        <title>Characterization of the Tupaia rhabdovirus genome reveals a long open reading frame overlapping with P and a novel gene encoding a small hydrophobic protein.</title>
        <authorList>
            <person name="Springfeld C."/>
            <person name="Darai G."/>
            <person name="Cattaneo R."/>
        </authorList>
    </citation>
    <scope>NUCLEOTIDE SEQUENCE [GENOMIC RNA]</scope>
</reference>
<evidence type="ECO:0000250" key="1"/>
<evidence type="ECO:0000250" key="2">
    <source>
        <dbReference type="UniProtKB" id="P03522"/>
    </source>
</evidence>
<evidence type="ECO:0000255" key="3"/>
<evidence type="ECO:0000305" key="4"/>
<protein>
    <recommendedName>
        <fullName>Glycoprotein</fullName>
    </recommendedName>
</protein>
<comment type="function">
    <text evidence="2">Attaches the virus to host receptors, inducing clathrin-dependent endocytosis of the virion.</text>
</comment>
<comment type="function">
    <text evidence="2">In the endosome, the acidic pH induces conformational changes in the glycoprotein trimer, which trigger fusion between virus and endosomal membrane.</text>
</comment>
<comment type="subunit">
    <text evidence="2">Homotrimer.</text>
</comment>
<comment type="subcellular location">
    <subcellularLocation>
        <location evidence="2">Virion membrane</location>
        <topology evidence="2">Single-pass type I membrane protein</topology>
    </subcellularLocation>
    <subcellularLocation>
        <location evidence="2">Host membrane</location>
        <topology evidence="2">Single-pass type I membrane protein</topology>
    </subcellularLocation>
</comment>
<comment type="PTM">
    <text evidence="2">Glycosylated by host.</text>
</comment>
<comment type="similarity">
    <text evidence="4">Belongs to the vesiculovirus glycoprotein family.</text>
</comment>
<gene>
    <name type="primary">G</name>
</gene>
<sequence length="531" mass="59336">MAPQTISLLWAMVCVSVYTRANRVVAPIHEPQNWKPATVDDFTCRTGFNLDFDSKFIKTKALVLKRVGQAKVKGYLCMKNRWTTTCETNWLYSKSVSHHITHVAVSAEECYNKIRDDASGNLKIESYPNPQCAWSSTVSREEDFIHISTSDVGYDMYTDTVLSPSFPGGTCKLKTCCKTIYPNIVWVPETPAQTQVRDALFDETMVTVTVEAKKVVKDSWVTGATITPSVMEGSCKKTLGSKSGILLPNGQWFSIVETGQITIQPKGSVEEKETWVNLINDLNLSDCAETQEAKVPTAEFTVYKTESMVFNILNYHLCLETVAKARSGKNLTRLDLARLAPEIPGVAHVYQLTSDGVRVGSTRYEIIAWKPTMGLDKTLGLTIVPSGNRNSETIKWIEWTRTDDGLLNGPNGIFIADGKEIVHPNLKMVSFELETYLISEHSTQLVPHPVIHSISDEIYPENYTIGGKNSYIKIHTPTAYFWSGIHWIEGAVQKLFIVVVATALIGLFILVVWLCCGCCSKSRPVRNQKWE</sequence>
<organismHost>
    <name type="scientific">Tupaia</name>
    <dbReference type="NCBI Taxonomy" id="9394"/>
</organismHost>
<feature type="signal peptide" evidence="3">
    <location>
        <begin position="1"/>
        <end position="21"/>
    </location>
</feature>
<feature type="chain" id="PRO_0000432049" description="Glycoprotein" evidence="3">
    <location>
        <begin position="22"/>
        <end position="531"/>
    </location>
</feature>
<feature type="topological domain" description="Virion surface" evidence="3">
    <location>
        <begin position="22"/>
        <end position="492"/>
    </location>
</feature>
<feature type="transmembrane region" description="Helical" evidence="3">
    <location>
        <begin position="493"/>
        <end position="513"/>
    </location>
</feature>
<feature type="topological domain" description="Intravirion" evidence="3">
    <location>
        <begin position="514"/>
        <end position="531"/>
    </location>
</feature>
<feature type="disulfide bond" evidence="1">
    <location>
        <begin position="44"/>
        <end position="318"/>
    </location>
</feature>
<feature type="disulfide bond" evidence="1">
    <location>
        <begin position="77"/>
        <end position="110"/>
    </location>
</feature>
<feature type="disulfide bond" evidence="1">
    <location>
        <begin position="86"/>
        <end position="132"/>
    </location>
</feature>
<feature type="disulfide bond" evidence="1">
    <location>
        <begin position="171"/>
        <end position="177"/>
    </location>
</feature>
<feature type="disulfide bond" evidence="1">
    <location>
        <begin position="235"/>
        <end position="287"/>
    </location>
</feature>
<accession>Q4VKV3</accession>